<reference key="1">
    <citation type="journal article" date="2001" name="Genome Res.">
        <title>The complete genome sequence of the lactic acid bacterium Lactococcus lactis ssp. lactis IL1403.</title>
        <authorList>
            <person name="Bolotin A."/>
            <person name="Wincker P."/>
            <person name="Mauger S."/>
            <person name="Jaillon O."/>
            <person name="Malarme K."/>
            <person name="Weissenbach J."/>
            <person name="Ehrlich S.D."/>
            <person name="Sorokin A."/>
        </authorList>
    </citation>
    <scope>NUCLEOTIDE SEQUENCE [LARGE SCALE GENOMIC DNA]</scope>
    <source>
        <strain>IL1403</strain>
    </source>
</reference>
<organism>
    <name type="scientific">Lactococcus lactis subsp. lactis (strain IL1403)</name>
    <name type="common">Streptococcus lactis</name>
    <dbReference type="NCBI Taxonomy" id="272623"/>
    <lineage>
        <taxon>Bacteria</taxon>
        <taxon>Bacillati</taxon>
        <taxon>Bacillota</taxon>
        <taxon>Bacilli</taxon>
        <taxon>Lactobacillales</taxon>
        <taxon>Streptococcaceae</taxon>
        <taxon>Lactococcus</taxon>
    </lineage>
</organism>
<sequence>MTEVNINVTEIMEALPHRYPFLLVDRVIDIAEDEITAIKNVTINEEFFQGHFPQYPVMPGVLIMEALAQAAGVLELSKPENKGKLVFYAGMDNVKYKKQVTPGDQLVLHAKFIKRRGPIAVVEAEATVDGKLAAKGTLTFALGR</sequence>
<protein>
    <recommendedName>
        <fullName>3-hydroxyacyl-[acyl-carrier-protein] dehydratase FabZ</fullName>
        <ecNumber>4.2.1.59</ecNumber>
    </recommendedName>
    <alternativeName>
        <fullName>(3R)-hydroxymyristoyl-[acyl-carrier-protein] dehydratase</fullName>
        <shortName>(3R)-hydroxymyristoyl-ACP dehydrase</shortName>
    </alternativeName>
    <alternativeName>
        <fullName>Beta-hydroxyacyl-ACP dehydratase</fullName>
    </alternativeName>
</protein>
<name>FABZ2_LACLA</name>
<keyword id="KW-0963">Cytoplasm</keyword>
<keyword id="KW-0441">Lipid A biosynthesis</keyword>
<keyword id="KW-0444">Lipid biosynthesis</keyword>
<keyword id="KW-0443">Lipid metabolism</keyword>
<keyword id="KW-0456">Lyase</keyword>
<keyword id="KW-1185">Reference proteome</keyword>
<evidence type="ECO:0000250" key="1"/>
<evidence type="ECO:0000305" key="2"/>
<feature type="chain" id="PRO_0000091692" description="3-hydroxyacyl-[acyl-carrier-protein] dehydratase FabZ">
    <location>
        <begin position="1"/>
        <end position="144"/>
    </location>
</feature>
<feature type="active site" evidence="1">
    <location>
        <position position="51"/>
    </location>
</feature>
<proteinExistence type="inferred from homology"/>
<comment type="function">
    <text evidence="1">Involved in unsaturated fatty acids biosynthesis. Catalyzes the dehydration of short chain beta-hydroxyacyl-ACPs and long chain saturated and unsaturated beta-hydroxyacyl-ACPs (By similarity).</text>
</comment>
<comment type="catalytic activity">
    <reaction>
        <text>a (3R)-hydroxyacyl-[ACP] = a (2E)-enoyl-[ACP] + H2O</text>
        <dbReference type="Rhea" id="RHEA:13097"/>
        <dbReference type="Rhea" id="RHEA-COMP:9925"/>
        <dbReference type="Rhea" id="RHEA-COMP:9945"/>
        <dbReference type="ChEBI" id="CHEBI:15377"/>
        <dbReference type="ChEBI" id="CHEBI:78784"/>
        <dbReference type="ChEBI" id="CHEBI:78827"/>
        <dbReference type="EC" id="4.2.1.59"/>
    </reaction>
</comment>
<comment type="subcellular location">
    <subcellularLocation>
        <location evidence="1">Cytoplasm</location>
    </subcellularLocation>
</comment>
<comment type="similarity">
    <text evidence="2">Belongs to the thioester dehydratase family. FabZ subfamily.</text>
</comment>
<gene>
    <name type="primary">fabZ2</name>
    <name type="ordered locus">LL0777</name>
    <name type="ORF">L0188</name>
</gene>
<accession>Q9CHF4</accession>
<dbReference type="EC" id="4.2.1.59"/>
<dbReference type="EMBL" id="AE005176">
    <property type="protein sequence ID" value="AAK04875.1"/>
    <property type="molecule type" value="Genomic_DNA"/>
</dbReference>
<dbReference type="PIR" id="A86722">
    <property type="entry name" value="A86722"/>
</dbReference>
<dbReference type="RefSeq" id="NP_266933.1">
    <property type="nucleotide sequence ID" value="NC_002662.1"/>
</dbReference>
<dbReference type="SMR" id="Q9CHF4"/>
<dbReference type="PaxDb" id="272623-L0188"/>
<dbReference type="EnsemblBacteria" id="AAK04875">
    <property type="protein sequence ID" value="AAK04875"/>
    <property type="gene ID" value="L0188"/>
</dbReference>
<dbReference type="KEGG" id="lla:L0188"/>
<dbReference type="PATRIC" id="fig|272623.7.peg.832"/>
<dbReference type="eggNOG" id="COG0764">
    <property type="taxonomic scope" value="Bacteria"/>
</dbReference>
<dbReference type="HOGENOM" id="CLU_078912_1_2_9"/>
<dbReference type="OrthoDB" id="9772788at2"/>
<dbReference type="Proteomes" id="UP000002196">
    <property type="component" value="Chromosome"/>
</dbReference>
<dbReference type="GO" id="GO:0005737">
    <property type="term" value="C:cytoplasm"/>
    <property type="evidence" value="ECO:0007669"/>
    <property type="project" value="UniProtKB-SubCell"/>
</dbReference>
<dbReference type="GO" id="GO:0016020">
    <property type="term" value="C:membrane"/>
    <property type="evidence" value="ECO:0007669"/>
    <property type="project" value="GOC"/>
</dbReference>
<dbReference type="GO" id="GO:0019171">
    <property type="term" value="F:(3R)-hydroxyacyl-[acyl-carrier-protein] dehydratase activity"/>
    <property type="evidence" value="ECO:0007669"/>
    <property type="project" value="UniProtKB-EC"/>
</dbReference>
<dbReference type="GO" id="GO:0006633">
    <property type="term" value="P:fatty acid biosynthetic process"/>
    <property type="evidence" value="ECO:0007669"/>
    <property type="project" value="UniProtKB-UniRule"/>
</dbReference>
<dbReference type="GO" id="GO:0009245">
    <property type="term" value="P:lipid A biosynthetic process"/>
    <property type="evidence" value="ECO:0007669"/>
    <property type="project" value="UniProtKB-UniRule"/>
</dbReference>
<dbReference type="CDD" id="cd01288">
    <property type="entry name" value="FabZ"/>
    <property type="match status" value="1"/>
</dbReference>
<dbReference type="FunFam" id="3.10.129.10:FF:000001">
    <property type="entry name" value="3-hydroxyacyl-[acyl-carrier-protein] dehydratase FabZ"/>
    <property type="match status" value="1"/>
</dbReference>
<dbReference type="Gene3D" id="3.10.129.10">
    <property type="entry name" value="Hotdog Thioesterase"/>
    <property type="match status" value="1"/>
</dbReference>
<dbReference type="HAMAP" id="MF_00406">
    <property type="entry name" value="FabZ"/>
    <property type="match status" value="1"/>
</dbReference>
<dbReference type="InterPro" id="IPR013114">
    <property type="entry name" value="FabA_FabZ"/>
</dbReference>
<dbReference type="InterPro" id="IPR010084">
    <property type="entry name" value="FabZ"/>
</dbReference>
<dbReference type="InterPro" id="IPR029069">
    <property type="entry name" value="HotDog_dom_sf"/>
</dbReference>
<dbReference type="NCBIfam" id="TIGR01750">
    <property type="entry name" value="fabZ"/>
    <property type="match status" value="1"/>
</dbReference>
<dbReference type="NCBIfam" id="NF000582">
    <property type="entry name" value="PRK00006.1"/>
    <property type="match status" value="1"/>
</dbReference>
<dbReference type="PANTHER" id="PTHR30272">
    <property type="entry name" value="3-HYDROXYACYL-[ACYL-CARRIER-PROTEIN] DEHYDRATASE"/>
    <property type="match status" value="1"/>
</dbReference>
<dbReference type="PANTHER" id="PTHR30272:SF1">
    <property type="entry name" value="3-HYDROXYACYL-[ACYL-CARRIER-PROTEIN] DEHYDRATASE"/>
    <property type="match status" value="1"/>
</dbReference>
<dbReference type="Pfam" id="PF07977">
    <property type="entry name" value="FabA"/>
    <property type="match status" value="1"/>
</dbReference>
<dbReference type="SUPFAM" id="SSF54637">
    <property type="entry name" value="Thioesterase/thiol ester dehydrase-isomerase"/>
    <property type="match status" value="1"/>
</dbReference>